<organism>
    <name type="scientific">Escherichia coli (strain K12)</name>
    <dbReference type="NCBI Taxonomy" id="83333"/>
    <lineage>
        <taxon>Bacteria</taxon>
        <taxon>Pseudomonadati</taxon>
        <taxon>Pseudomonadota</taxon>
        <taxon>Gammaproteobacteria</taxon>
        <taxon>Enterobacterales</taxon>
        <taxon>Enterobacteriaceae</taxon>
        <taxon>Escherichia</taxon>
    </lineage>
</organism>
<proteinExistence type="predicted"/>
<gene>
    <name type="primary">yfeS</name>
    <name type="ordered locus">b2420</name>
    <name type="ordered locus">JW2413</name>
</gene>
<reference key="1">
    <citation type="journal article" date="1997" name="DNA Res.">
        <title>Construction of a contiguous 874-kb sequence of the Escherichia coli-K12 genome corresponding to 50.0-68.8 min on the linkage map and analysis of its sequence features.</title>
        <authorList>
            <person name="Yamamoto Y."/>
            <person name="Aiba H."/>
            <person name="Baba T."/>
            <person name="Hayashi K."/>
            <person name="Inada T."/>
            <person name="Isono K."/>
            <person name="Itoh T."/>
            <person name="Kimura S."/>
            <person name="Kitagawa M."/>
            <person name="Makino K."/>
            <person name="Miki T."/>
            <person name="Mitsuhashi N."/>
            <person name="Mizobuchi K."/>
            <person name="Mori H."/>
            <person name="Nakade S."/>
            <person name="Nakamura Y."/>
            <person name="Nashimoto H."/>
            <person name="Oshima T."/>
            <person name="Oyama S."/>
            <person name="Saito N."/>
            <person name="Sampei G."/>
            <person name="Satoh Y."/>
            <person name="Sivasundaram S."/>
            <person name="Tagami H."/>
            <person name="Takahashi H."/>
            <person name="Takeda J."/>
            <person name="Takemoto K."/>
            <person name="Uehara K."/>
            <person name="Wada C."/>
            <person name="Yamagata S."/>
            <person name="Horiuchi T."/>
        </authorList>
    </citation>
    <scope>NUCLEOTIDE SEQUENCE [LARGE SCALE GENOMIC DNA]</scope>
    <source>
        <strain>K12 / W3110 / ATCC 27325 / DSM 5911</strain>
    </source>
</reference>
<reference key="2">
    <citation type="journal article" date="1997" name="Science">
        <title>The complete genome sequence of Escherichia coli K-12.</title>
        <authorList>
            <person name="Blattner F.R."/>
            <person name="Plunkett G. III"/>
            <person name="Bloch C.A."/>
            <person name="Perna N.T."/>
            <person name="Burland V."/>
            <person name="Riley M."/>
            <person name="Collado-Vides J."/>
            <person name="Glasner J.D."/>
            <person name="Rode C.K."/>
            <person name="Mayhew G.F."/>
            <person name="Gregor J."/>
            <person name="Davis N.W."/>
            <person name="Kirkpatrick H.A."/>
            <person name="Goeden M.A."/>
            <person name="Rose D.J."/>
            <person name="Mau B."/>
            <person name="Shao Y."/>
        </authorList>
    </citation>
    <scope>NUCLEOTIDE SEQUENCE [LARGE SCALE GENOMIC DNA]</scope>
    <source>
        <strain>K12 / MG1655 / ATCC 47076</strain>
    </source>
</reference>
<reference key="3">
    <citation type="journal article" date="2006" name="Mol. Syst. Biol.">
        <title>Highly accurate genome sequences of Escherichia coli K-12 strains MG1655 and W3110.</title>
        <authorList>
            <person name="Hayashi K."/>
            <person name="Morooka N."/>
            <person name="Yamamoto Y."/>
            <person name="Fujita K."/>
            <person name="Isono K."/>
            <person name="Choi S."/>
            <person name="Ohtsubo E."/>
            <person name="Baba T."/>
            <person name="Wanner B.L."/>
            <person name="Mori H."/>
            <person name="Horiuchi T."/>
        </authorList>
    </citation>
    <scope>NUCLEOTIDE SEQUENCE [LARGE SCALE GENOMIC DNA]</scope>
    <source>
        <strain>K12 / W3110 / ATCC 27325 / DSM 5911</strain>
    </source>
</reference>
<dbReference type="EMBL" id="U00096">
    <property type="protein sequence ID" value="AAC75473.1"/>
    <property type="molecule type" value="Genomic_DNA"/>
</dbReference>
<dbReference type="EMBL" id="AP009048">
    <property type="protein sequence ID" value="BAA16294.1"/>
    <property type="molecule type" value="Genomic_DNA"/>
</dbReference>
<dbReference type="PIR" id="C65016">
    <property type="entry name" value="C65016"/>
</dbReference>
<dbReference type="RefSeq" id="NP_416915.1">
    <property type="nucleotide sequence ID" value="NC_000913.3"/>
</dbReference>
<dbReference type="RefSeq" id="WP_000745534.1">
    <property type="nucleotide sequence ID" value="NZ_LN832404.1"/>
</dbReference>
<dbReference type="SMR" id="P78271"/>
<dbReference type="BioGRID" id="4261655">
    <property type="interactions" value="17"/>
</dbReference>
<dbReference type="BioGRID" id="851227">
    <property type="interactions" value="2"/>
</dbReference>
<dbReference type="FunCoup" id="P78271">
    <property type="interactions" value="8"/>
</dbReference>
<dbReference type="IntAct" id="P78271">
    <property type="interactions" value="6"/>
</dbReference>
<dbReference type="STRING" id="511145.b2420"/>
<dbReference type="PaxDb" id="511145-b2420"/>
<dbReference type="EnsemblBacteria" id="AAC75473">
    <property type="protein sequence ID" value="AAC75473"/>
    <property type="gene ID" value="b2420"/>
</dbReference>
<dbReference type="GeneID" id="946887"/>
<dbReference type="KEGG" id="ecj:JW2413"/>
<dbReference type="KEGG" id="eco:b2420"/>
<dbReference type="KEGG" id="ecoc:C3026_13450"/>
<dbReference type="PATRIC" id="fig|511145.12.peg.2514"/>
<dbReference type="EchoBASE" id="EB3912"/>
<dbReference type="eggNOG" id="COG3831">
    <property type="taxonomic scope" value="Bacteria"/>
</dbReference>
<dbReference type="eggNOG" id="COG4884">
    <property type="taxonomic scope" value="Bacteria"/>
</dbReference>
<dbReference type="HOGENOM" id="CLU_095641_0_0_6"/>
<dbReference type="InParanoid" id="P78271"/>
<dbReference type="OMA" id="DYTSVMP"/>
<dbReference type="OrthoDB" id="6200718at2"/>
<dbReference type="PhylomeDB" id="P78271"/>
<dbReference type="BioCyc" id="EcoCyc:G7261-MONOMER"/>
<dbReference type="PRO" id="PR:P78271"/>
<dbReference type="Proteomes" id="UP000000625">
    <property type="component" value="Chromosome"/>
</dbReference>
<dbReference type="CDD" id="cd07996">
    <property type="entry name" value="WGR_MMR_like"/>
    <property type="match status" value="1"/>
</dbReference>
<dbReference type="Gene3D" id="2.20.140.10">
    <property type="entry name" value="WGR domain"/>
    <property type="match status" value="1"/>
</dbReference>
<dbReference type="InterPro" id="IPR050458">
    <property type="entry name" value="LolB"/>
</dbReference>
<dbReference type="InterPro" id="IPR016835">
    <property type="entry name" value="UCP026317_WGR"/>
</dbReference>
<dbReference type="InterPro" id="IPR036930">
    <property type="entry name" value="WGR_dom_sf"/>
</dbReference>
<dbReference type="InterPro" id="IPR008893">
    <property type="entry name" value="WGR_domain"/>
</dbReference>
<dbReference type="InterPro" id="IPR049809">
    <property type="entry name" value="YehF/YfeS-like_WGR"/>
</dbReference>
<dbReference type="PANTHER" id="PTHR30634">
    <property type="entry name" value="OUTER MEMBRANE LOLAB LIPOPROTEIN INSERTION APPARATUS"/>
    <property type="match status" value="1"/>
</dbReference>
<dbReference type="PANTHER" id="PTHR30634:SF13">
    <property type="entry name" value="PROTEIN YEHF"/>
    <property type="match status" value="1"/>
</dbReference>
<dbReference type="Pfam" id="PF05406">
    <property type="entry name" value="WGR"/>
    <property type="match status" value="1"/>
</dbReference>
<dbReference type="PIRSF" id="PIRSF026317">
    <property type="entry name" value="UCP026317_WGR"/>
    <property type="match status" value="1"/>
</dbReference>
<dbReference type="SMART" id="SM00773">
    <property type="entry name" value="WGR"/>
    <property type="match status" value="1"/>
</dbReference>
<dbReference type="SUPFAM" id="SSF142921">
    <property type="entry name" value="WGR domain-like"/>
    <property type="match status" value="1"/>
</dbReference>
<dbReference type="PROSITE" id="PS51977">
    <property type="entry name" value="WGR"/>
    <property type="match status" value="1"/>
</dbReference>
<evidence type="ECO:0000255" key="1">
    <source>
        <dbReference type="PROSITE-ProRule" id="PRU01321"/>
    </source>
</evidence>
<accession>P78271</accession>
<feature type="chain" id="PRO_0000169225" description="Uncharacterized protein YfeS">
    <location>
        <begin position="1"/>
        <end position="244"/>
    </location>
</feature>
<feature type="domain" description="WGR" evidence="1">
    <location>
        <begin position="1"/>
        <end position="78"/>
    </location>
</feature>
<name>YFES_ECOLI</name>
<protein>
    <recommendedName>
        <fullName>Uncharacterized protein YfeS</fullName>
    </recommendedName>
</protein>
<keyword id="KW-1185">Reference proteome</keyword>
<sequence length="244" mass="28243">MKKRFIYHDEKSNKFWWIDYEGDSLAVNYGKVGSIGKFQTKEFDNEEQCLKEASKLIAAKMKKGYQEDPKFNFMDRYYFDDEEIGLHVKTSHPNFQCHFTDPLYMCCWDEESPFGSDEGADALNVLENSLRKEPDLDCADFPQMLIETMWGMKYIAMDSILEEDVRAQLLVDEMSTIQSNMITYATAFGQIKVMGKISHKLKKMGLNALARHQLTAKILQWGDGQDSPILQKMIDDLTAFPHEN</sequence>